<sequence>MEHEKLYPGQEALLYSHKIVQLSKALWKTVEKDWQNWIKPFDLNINEHHILWISHALGGASISEIAKYGVMHVSTAFNFSKKLEDRGLLTFSKKETDKRNTYVQLTPEGESLLLETIQAFRPEENGVFRASLPLQELYGKFPELTDISAIVRRLYGDSFMDIFAETSKMITEEADRRPQDPVIDSIKKA</sequence>
<accession>B1YK88</accession>
<proteinExistence type="inferred from homology"/>
<feature type="chain" id="PRO_0000343629" description="HTH-type transcriptional regulator Hpr">
    <location>
        <begin position="1"/>
        <end position="189"/>
    </location>
</feature>
<feature type="domain" description="HTH marR-type" evidence="1">
    <location>
        <begin position="12"/>
        <end position="156"/>
    </location>
</feature>
<feature type="DNA-binding region" description="H-T-H motif" evidence="1">
    <location>
        <begin position="62"/>
        <end position="85"/>
    </location>
</feature>
<dbReference type="EMBL" id="CP001022">
    <property type="protein sequence ID" value="ACB60169.1"/>
    <property type="molecule type" value="Genomic_DNA"/>
</dbReference>
<dbReference type="RefSeq" id="WP_012369593.1">
    <property type="nucleotide sequence ID" value="NC_010556.1"/>
</dbReference>
<dbReference type="SMR" id="B1YK88"/>
<dbReference type="STRING" id="262543.Exig_0688"/>
<dbReference type="KEGG" id="esi:Exig_0688"/>
<dbReference type="eggNOG" id="COG1846">
    <property type="taxonomic scope" value="Bacteria"/>
</dbReference>
<dbReference type="HOGENOM" id="CLU_115790_0_0_9"/>
<dbReference type="OrthoDB" id="2393954at2"/>
<dbReference type="Proteomes" id="UP000001681">
    <property type="component" value="Chromosome"/>
</dbReference>
<dbReference type="GO" id="GO:0003677">
    <property type="term" value="F:DNA binding"/>
    <property type="evidence" value="ECO:0007669"/>
    <property type="project" value="UniProtKB-KW"/>
</dbReference>
<dbReference type="GO" id="GO:0003700">
    <property type="term" value="F:DNA-binding transcription factor activity"/>
    <property type="evidence" value="ECO:0007669"/>
    <property type="project" value="InterPro"/>
</dbReference>
<dbReference type="GO" id="GO:0006950">
    <property type="term" value="P:response to stress"/>
    <property type="evidence" value="ECO:0007669"/>
    <property type="project" value="TreeGrafter"/>
</dbReference>
<dbReference type="GO" id="GO:0030435">
    <property type="term" value="P:sporulation resulting in formation of a cellular spore"/>
    <property type="evidence" value="ECO:0007669"/>
    <property type="project" value="UniProtKB-KW"/>
</dbReference>
<dbReference type="Gene3D" id="1.10.10.10">
    <property type="entry name" value="Winged helix-like DNA-binding domain superfamily/Winged helix DNA-binding domain"/>
    <property type="match status" value="1"/>
</dbReference>
<dbReference type="HAMAP" id="MF_01911">
    <property type="entry name" value="HTH_type_Hpr"/>
    <property type="match status" value="1"/>
</dbReference>
<dbReference type="InterPro" id="IPR000835">
    <property type="entry name" value="HTH_MarR-typ"/>
</dbReference>
<dbReference type="InterPro" id="IPR023488">
    <property type="entry name" value="HTH_tscrpt_reg_Hpr"/>
</dbReference>
<dbReference type="InterPro" id="IPR039422">
    <property type="entry name" value="MarR/SlyA-like"/>
</dbReference>
<dbReference type="InterPro" id="IPR023187">
    <property type="entry name" value="Tscrpt_reg_MarR-type_CS"/>
</dbReference>
<dbReference type="InterPro" id="IPR036388">
    <property type="entry name" value="WH-like_DNA-bd_sf"/>
</dbReference>
<dbReference type="InterPro" id="IPR036390">
    <property type="entry name" value="WH_DNA-bd_sf"/>
</dbReference>
<dbReference type="NCBIfam" id="NF010349">
    <property type="entry name" value="PRK13777.1"/>
    <property type="match status" value="1"/>
</dbReference>
<dbReference type="PANTHER" id="PTHR33164:SF58">
    <property type="entry name" value="DNA-BINDING TRANSCRIPTIONAL REPRESSOR SCOC"/>
    <property type="match status" value="1"/>
</dbReference>
<dbReference type="PANTHER" id="PTHR33164">
    <property type="entry name" value="TRANSCRIPTIONAL REGULATOR, MARR FAMILY"/>
    <property type="match status" value="1"/>
</dbReference>
<dbReference type="Pfam" id="PF01047">
    <property type="entry name" value="MarR"/>
    <property type="match status" value="1"/>
</dbReference>
<dbReference type="SMART" id="SM00347">
    <property type="entry name" value="HTH_MARR"/>
    <property type="match status" value="1"/>
</dbReference>
<dbReference type="SUPFAM" id="SSF46785">
    <property type="entry name" value="Winged helix' DNA-binding domain"/>
    <property type="match status" value="1"/>
</dbReference>
<dbReference type="PROSITE" id="PS01117">
    <property type="entry name" value="HTH_MARR_1"/>
    <property type="match status" value="1"/>
</dbReference>
<dbReference type="PROSITE" id="PS50995">
    <property type="entry name" value="HTH_MARR_2"/>
    <property type="match status" value="1"/>
</dbReference>
<keyword id="KW-0238">DNA-binding</keyword>
<keyword id="KW-1185">Reference proteome</keyword>
<keyword id="KW-0678">Repressor</keyword>
<keyword id="KW-0749">Sporulation</keyword>
<keyword id="KW-0804">Transcription</keyword>
<keyword id="KW-0805">Transcription regulation</keyword>
<name>HPR_EXIS2</name>
<comment type="function">
    <text evidence="1">Negative regulator of protease production and sporulation.</text>
</comment>
<comment type="subunit">
    <text evidence="1">Homodimer.</text>
</comment>
<gene>
    <name evidence="1" type="primary">hpr</name>
    <name type="ordered locus">Exig_0688</name>
</gene>
<organism>
    <name type="scientific">Exiguobacterium sibiricum (strain DSM 17290 / CCUG 55495 / CIP 109462 / JCM 13490 / 255-15)</name>
    <dbReference type="NCBI Taxonomy" id="262543"/>
    <lineage>
        <taxon>Bacteria</taxon>
        <taxon>Bacillati</taxon>
        <taxon>Bacillota</taxon>
        <taxon>Bacilli</taxon>
        <taxon>Bacillales</taxon>
        <taxon>Bacillales Family XII. Incertae Sedis</taxon>
        <taxon>Exiguobacterium</taxon>
    </lineage>
</organism>
<evidence type="ECO:0000255" key="1">
    <source>
        <dbReference type="HAMAP-Rule" id="MF_01911"/>
    </source>
</evidence>
<reference key="1">
    <citation type="submission" date="2008-04" db="EMBL/GenBank/DDBJ databases">
        <title>Complete sequence of chromosome of Exiguobacterium sibiricum 255-15.</title>
        <authorList>
            <consortium name="US DOE Joint Genome Institute"/>
            <person name="Copeland A."/>
            <person name="Lucas S."/>
            <person name="Lapidus A."/>
            <person name="Glavina del Rio T."/>
            <person name="Dalin E."/>
            <person name="Tice H."/>
            <person name="Bruce D."/>
            <person name="Goodwin L."/>
            <person name="Pitluck S."/>
            <person name="Kiss H."/>
            <person name="Chertkov O."/>
            <person name="Monk C."/>
            <person name="Brettin T."/>
            <person name="Detter J.C."/>
            <person name="Han C."/>
            <person name="Kuske C.R."/>
            <person name="Schmutz J."/>
            <person name="Larimer F."/>
            <person name="Land M."/>
            <person name="Hauser L."/>
            <person name="Kyrpides N."/>
            <person name="Mikhailova N."/>
            <person name="Vishnivetskaya T."/>
            <person name="Rodrigues D.F."/>
            <person name="Gilichinsky D."/>
            <person name="Tiedje J."/>
            <person name="Richardson P."/>
        </authorList>
    </citation>
    <scope>NUCLEOTIDE SEQUENCE [LARGE SCALE GENOMIC DNA]</scope>
    <source>
        <strain>DSM 17290 / CCUG 55495 / CIP 109462 / JCM 13490 / 255-15</strain>
    </source>
</reference>
<protein>
    <recommendedName>
        <fullName evidence="1">HTH-type transcriptional regulator Hpr</fullName>
    </recommendedName>
    <alternativeName>
        <fullName evidence="1">Protease production regulatory protein Hpr</fullName>
    </alternativeName>
</protein>